<proteinExistence type="inferred from homology"/>
<reference key="1">
    <citation type="submission" date="2006-12" db="EMBL/GenBank/DDBJ databases">
        <title>Complete sequence of Acidovorax avenae subsp. citrulli AAC00-1.</title>
        <authorList>
            <person name="Copeland A."/>
            <person name="Lucas S."/>
            <person name="Lapidus A."/>
            <person name="Barry K."/>
            <person name="Detter J.C."/>
            <person name="Glavina del Rio T."/>
            <person name="Dalin E."/>
            <person name="Tice H."/>
            <person name="Pitluck S."/>
            <person name="Kiss H."/>
            <person name="Brettin T."/>
            <person name="Bruce D."/>
            <person name="Han C."/>
            <person name="Tapia R."/>
            <person name="Gilna P."/>
            <person name="Schmutz J."/>
            <person name="Larimer F."/>
            <person name="Land M."/>
            <person name="Hauser L."/>
            <person name="Kyrpides N."/>
            <person name="Kim E."/>
            <person name="Stahl D."/>
            <person name="Richardson P."/>
        </authorList>
    </citation>
    <scope>NUCLEOTIDE SEQUENCE [LARGE SCALE GENOMIC DNA]</scope>
    <source>
        <strain>AAC00-1</strain>
    </source>
</reference>
<name>HIS2_PARC0</name>
<protein>
    <recommendedName>
        <fullName evidence="1">Phosphoribosyl-ATP pyrophosphatase</fullName>
        <shortName evidence="1">PRA-PH</shortName>
        <ecNumber evidence="1">3.6.1.31</ecNumber>
    </recommendedName>
</protein>
<accession>A1TL08</accession>
<comment type="catalytic activity">
    <reaction evidence="1">
        <text>1-(5-phospho-beta-D-ribosyl)-ATP + H2O = 1-(5-phospho-beta-D-ribosyl)-5'-AMP + diphosphate + H(+)</text>
        <dbReference type="Rhea" id="RHEA:22828"/>
        <dbReference type="ChEBI" id="CHEBI:15377"/>
        <dbReference type="ChEBI" id="CHEBI:15378"/>
        <dbReference type="ChEBI" id="CHEBI:33019"/>
        <dbReference type="ChEBI" id="CHEBI:59457"/>
        <dbReference type="ChEBI" id="CHEBI:73183"/>
        <dbReference type="EC" id="3.6.1.31"/>
    </reaction>
</comment>
<comment type="pathway">
    <text evidence="1">Amino-acid biosynthesis; L-histidine biosynthesis; L-histidine from 5-phospho-alpha-D-ribose 1-diphosphate: step 2/9.</text>
</comment>
<comment type="subcellular location">
    <subcellularLocation>
        <location evidence="1">Cytoplasm</location>
    </subcellularLocation>
</comment>
<comment type="similarity">
    <text evidence="1">Belongs to the PRA-PH family.</text>
</comment>
<feature type="chain" id="PRO_0000319635" description="Phosphoribosyl-ATP pyrophosphatase">
    <location>
        <begin position="1"/>
        <end position="137"/>
    </location>
</feature>
<feature type="region of interest" description="Disordered" evidence="2">
    <location>
        <begin position="114"/>
        <end position="137"/>
    </location>
</feature>
<feature type="compositionally biased region" description="Basic and acidic residues" evidence="2">
    <location>
        <begin position="114"/>
        <end position="124"/>
    </location>
</feature>
<dbReference type="EC" id="3.6.1.31" evidence="1"/>
<dbReference type="EMBL" id="CP000512">
    <property type="protein sequence ID" value="ABM31646.1"/>
    <property type="molecule type" value="Genomic_DNA"/>
</dbReference>
<dbReference type="RefSeq" id="WP_011794204.1">
    <property type="nucleotide sequence ID" value="NC_008752.1"/>
</dbReference>
<dbReference type="SMR" id="A1TL08"/>
<dbReference type="STRING" id="397945.Aave_1049"/>
<dbReference type="GeneID" id="79790704"/>
<dbReference type="KEGG" id="aav:Aave_1049"/>
<dbReference type="eggNOG" id="COG0140">
    <property type="taxonomic scope" value="Bacteria"/>
</dbReference>
<dbReference type="HOGENOM" id="CLU_123337_1_2_4"/>
<dbReference type="OrthoDB" id="9814738at2"/>
<dbReference type="UniPathway" id="UPA00031">
    <property type="reaction ID" value="UER00007"/>
</dbReference>
<dbReference type="Proteomes" id="UP000002596">
    <property type="component" value="Chromosome"/>
</dbReference>
<dbReference type="GO" id="GO:0005737">
    <property type="term" value="C:cytoplasm"/>
    <property type="evidence" value="ECO:0007669"/>
    <property type="project" value="UniProtKB-SubCell"/>
</dbReference>
<dbReference type="GO" id="GO:0005524">
    <property type="term" value="F:ATP binding"/>
    <property type="evidence" value="ECO:0007669"/>
    <property type="project" value="UniProtKB-KW"/>
</dbReference>
<dbReference type="GO" id="GO:0004636">
    <property type="term" value="F:phosphoribosyl-ATP diphosphatase activity"/>
    <property type="evidence" value="ECO:0007669"/>
    <property type="project" value="UniProtKB-UniRule"/>
</dbReference>
<dbReference type="GO" id="GO:0000105">
    <property type="term" value="P:L-histidine biosynthetic process"/>
    <property type="evidence" value="ECO:0007669"/>
    <property type="project" value="UniProtKB-UniRule"/>
</dbReference>
<dbReference type="CDD" id="cd11534">
    <property type="entry name" value="NTP-PPase_HisIE_like"/>
    <property type="match status" value="1"/>
</dbReference>
<dbReference type="Gene3D" id="1.10.287.1080">
    <property type="entry name" value="MazG-like"/>
    <property type="match status" value="1"/>
</dbReference>
<dbReference type="HAMAP" id="MF_01020">
    <property type="entry name" value="HisE"/>
    <property type="match status" value="1"/>
</dbReference>
<dbReference type="InterPro" id="IPR008179">
    <property type="entry name" value="HisE"/>
</dbReference>
<dbReference type="InterPro" id="IPR021130">
    <property type="entry name" value="PRib-ATP_PPHydrolase-like"/>
</dbReference>
<dbReference type="NCBIfam" id="TIGR03188">
    <property type="entry name" value="histidine_hisI"/>
    <property type="match status" value="1"/>
</dbReference>
<dbReference type="NCBIfam" id="NF001611">
    <property type="entry name" value="PRK00400.1-3"/>
    <property type="match status" value="1"/>
</dbReference>
<dbReference type="PANTHER" id="PTHR42945">
    <property type="entry name" value="HISTIDINE BIOSYNTHESIS BIFUNCTIONAL PROTEIN"/>
    <property type="match status" value="1"/>
</dbReference>
<dbReference type="PANTHER" id="PTHR42945:SF9">
    <property type="entry name" value="HISTIDINE BIOSYNTHESIS BIFUNCTIONAL PROTEIN HISIE"/>
    <property type="match status" value="1"/>
</dbReference>
<dbReference type="Pfam" id="PF01503">
    <property type="entry name" value="PRA-PH"/>
    <property type="match status" value="1"/>
</dbReference>
<dbReference type="SUPFAM" id="SSF101386">
    <property type="entry name" value="all-alpha NTP pyrophosphatases"/>
    <property type="match status" value="1"/>
</dbReference>
<gene>
    <name evidence="1" type="primary">hisE</name>
    <name type="ordered locus">Aave_1049</name>
</gene>
<sequence>MTHDSLSPVAAPAVHSGDALARLAAVIESRKPANGGDADKSYVARLLHKGPDAFLKKIGEEATEVVMAAKDVDHGADASKLVYEVADLWFHSMIALAHYGLAPADVVAELERREGTSGIEEKALRKSLQRAAEEAQP</sequence>
<keyword id="KW-0028">Amino-acid biosynthesis</keyword>
<keyword id="KW-0067">ATP-binding</keyword>
<keyword id="KW-0963">Cytoplasm</keyword>
<keyword id="KW-0368">Histidine biosynthesis</keyword>
<keyword id="KW-0378">Hydrolase</keyword>
<keyword id="KW-0547">Nucleotide-binding</keyword>
<evidence type="ECO:0000255" key="1">
    <source>
        <dbReference type="HAMAP-Rule" id="MF_01020"/>
    </source>
</evidence>
<evidence type="ECO:0000256" key="2">
    <source>
        <dbReference type="SAM" id="MobiDB-lite"/>
    </source>
</evidence>
<organism>
    <name type="scientific">Paracidovorax citrulli (strain AAC00-1)</name>
    <name type="common">Acidovorax citrulli</name>
    <dbReference type="NCBI Taxonomy" id="397945"/>
    <lineage>
        <taxon>Bacteria</taxon>
        <taxon>Pseudomonadati</taxon>
        <taxon>Pseudomonadota</taxon>
        <taxon>Betaproteobacteria</taxon>
        <taxon>Burkholderiales</taxon>
        <taxon>Comamonadaceae</taxon>
        <taxon>Paracidovorax</taxon>
    </lineage>
</organism>